<proteinExistence type="inferred from homology"/>
<dbReference type="EC" id="2.4.1.228" evidence="2"/>
<dbReference type="EMBL" id="AB041421">
    <property type="protein sequence ID" value="BAA94506.1"/>
    <property type="molecule type" value="Genomic_DNA"/>
</dbReference>
<dbReference type="CAZy" id="GT32">
    <property type="family name" value="Glycosyltransferase Family 32"/>
</dbReference>
<dbReference type="GO" id="GO:0000139">
    <property type="term" value="C:Golgi membrane"/>
    <property type="evidence" value="ECO:0007669"/>
    <property type="project" value="UniProtKB-SubCell"/>
</dbReference>
<dbReference type="GO" id="GO:0050512">
    <property type="term" value="F:lactosylceramide 4-alpha-galactosyltransferase activity"/>
    <property type="evidence" value="ECO:0007669"/>
    <property type="project" value="UniProtKB-EC"/>
</dbReference>
<dbReference type="GO" id="GO:0006688">
    <property type="term" value="P:glycosphingolipid biosynthetic process"/>
    <property type="evidence" value="ECO:0007669"/>
    <property type="project" value="TreeGrafter"/>
</dbReference>
<dbReference type="Gene3D" id="3.90.550.20">
    <property type="match status" value="1"/>
</dbReference>
<dbReference type="InterPro" id="IPR007652">
    <property type="entry name" value="A1-4-GlycosylTfrase_dom"/>
</dbReference>
<dbReference type="InterPro" id="IPR051981">
    <property type="entry name" value="Glycosyltransf_32"/>
</dbReference>
<dbReference type="InterPro" id="IPR007577">
    <property type="entry name" value="GlycoTrfase_DXD_sugar-bd_CS"/>
</dbReference>
<dbReference type="InterPro" id="IPR029044">
    <property type="entry name" value="Nucleotide-diphossugar_trans"/>
</dbReference>
<dbReference type="PANTHER" id="PTHR12042:SF17">
    <property type="entry name" value="LACTOSYLCERAMIDE 4-ALPHA-GALACTOSYLTRANSFERASE"/>
    <property type="match status" value="1"/>
</dbReference>
<dbReference type="PANTHER" id="PTHR12042">
    <property type="entry name" value="LACTOSYLCERAMIDE 4-ALPHA-GALACTOSYLTRANSFERASE ALPHA- 1,4-GALACTOSYLTRANSFERASE"/>
    <property type="match status" value="1"/>
</dbReference>
<dbReference type="Pfam" id="PF04572">
    <property type="entry name" value="Gb3_synth"/>
    <property type="match status" value="1"/>
</dbReference>
<dbReference type="Pfam" id="PF04488">
    <property type="entry name" value="Gly_transf_sug"/>
    <property type="match status" value="1"/>
</dbReference>
<dbReference type="SUPFAM" id="SSF53448">
    <property type="entry name" value="Nucleotide-diphospho-sugar transferases"/>
    <property type="match status" value="1"/>
</dbReference>
<reference key="1">
    <citation type="journal article" date="2004" name="Mol. Biol. Evol.">
        <title>Human-specific amino acid changes found in 103 protein-coding genes.</title>
        <authorList>
            <person name="Kitano T."/>
            <person name="Liu Y.-H."/>
            <person name="Ueda S."/>
            <person name="Saitou N."/>
        </authorList>
    </citation>
    <scope>NUCLEOTIDE SEQUENCE [GENOMIC DNA]</scope>
    <source>
        <strain>Isolate oran-Po17</strain>
    </source>
</reference>
<organism>
    <name type="scientific">Pongo pygmaeus</name>
    <name type="common">Bornean orangutan</name>
    <dbReference type="NCBI Taxonomy" id="9600"/>
    <lineage>
        <taxon>Eukaryota</taxon>
        <taxon>Metazoa</taxon>
        <taxon>Chordata</taxon>
        <taxon>Craniata</taxon>
        <taxon>Vertebrata</taxon>
        <taxon>Euteleostomi</taxon>
        <taxon>Mammalia</taxon>
        <taxon>Eutheria</taxon>
        <taxon>Euarchontoglires</taxon>
        <taxon>Primates</taxon>
        <taxon>Haplorrhini</taxon>
        <taxon>Catarrhini</taxon>
        <taxon>Hominidae</taxon>
        <taxon>Pongo</taxon>
    </lineage>
</organism>
<feature type="chain" id="PRO_0000080581" description="Lactosylceramide 4-alpha-galactosyltransferase">
    <location>
        <begin position="1" status="less than"/>
        <end position="218"/>
    </location>
</feature>
<feature type="short sequence motif" description="DXD motif" evidence="1">
    <location>
        <begin position="57"/>
        <end position="59"/>
    </location>
</feature>
<feature type="non-terminal residue">
    <location>
        <position position="1"/>
    </location>
</feature>
<sequence>FPNVQMLPLDLRELFRDTPLADWYTAVQGRWEPYLLPVLSDASRIALMWKFGGIYLDTDFIVLKNLRNLTNVLGTQSRYVLNGAFLAFQRRHEFMALCMRDFVDHYNGWIWGHQGPQLLTRVFKKWCSIRSLAESRACRGVTTLPPEAFYPIPWQDWKKYFEDISPEELPRLLNATYAVHVWNKKSQGTRFEATSRALLAQLHARYCPTTHEAMKMYL</sequence>
<evidence type="ECO:0000250" key="1"/>
<evidence type="ECO:0000250" key="2">
    <source>
        <dbReference type="UniProtKB" id="Q9NPC4"/>
    </source>
</evidence>
<evidence type="ECO:0000305" key="3"/>
<protein>
    <recommendedName>
        <fullName>Lactosylceramide 4-alpha-galactosyltransferase</fullName>
        <ecNumber evidence="2">2.4.1.228</ecNumber>
    </recommendedName>
    <alternativeName>
        <fullName>Alpha-1,4-N-acetylglucosaminyltransferase</fullName>
    </alternativeName>
    <alternativeName>
        <fullName>Alpha-1,4-galactosyltransferase</fullName>
    </alternativeName>
    <alternativeName>
        <fullName>Globotriaosylceramide synthase</fullName>
        <shortName>Gb3 synthase</shortName>
    </alternativeName>
    <alternativeName>
        <fullName>UDP-galactose:beta-D-galactosyl-beta1-R 4-alpha-D-galactosyltransferase</fullName>
    </alternativeName>
</protein>
<gene>
    <name type="primary">A4GALT</name>
    <name type="synonym">A14GALT</name>
    <name type="synonym">A4GALT1</name>
</gene>
<keyword id="KW-0328">Glycosyltransferase</keyword>
<keyword id="KW-0333">Golgi apparatus</keyword>
<keyword id="KW-0444">Lipid biosynthesis</keyword>
<keyword id="KW-0443">Lipid metabolism</keyword>
<keyword id="KW-0472">Membrane</keyword>
<keyword id="KW-0808">Transferase</keyword>
<name>A4GAT_PONPY</name>
<comment type="function">
    <text evidence="2">Catalyzes the transfer of galactose from UDP-alpha-D-galactose to lactosylceramide/beta-D-galactosyl-(1-&gt;4)-beta-D-glucosyl-(1&lt;-&gt;1)-ceramide(d18:1(4E)) to produce globotriaosylceramide/globoside Gb3Cer (d18:1(4E)). Also able to transfer galactose to galactosylceramide/beta-D-Gal-(1&lt;-&gt;1')-Cer. Globoside Gb3Cer is a glycosphingolipid of the globo serie, one of the major types of neutral root structures of glycosphingolipids, that constitute a significant portion of mammalian cell membranes.</text>
</comment>
<comment type="catalytic activity">
    <reaction evidence="2">
        <text>a beta-D-Gal-(1-&gt;4)-beta-D-Glc-(1&lt;-&gt;1)-Cer(d18:1(4E)) + UDP-alpha-D-galactose = a globoside Gb3Cer (d18:1(4E)) + UDP + H(+)</text>
        <dbReference type="Rhea" id="RHEA:11924"/>
        <dbReference type="ChEBI" id="CHEBI:15378"/>
        <dbReference type="ChEBI" id="CHEBI:17950"/>
        <dbReference type="ChEBI" id="CHEBI:18313"/>
        <dbReference type="ChEBI" id="CHEBI:58223"/>
        <dbReference type="ChEBI" id="CHEBI:66914"/>
        <dbReference type="EC" id="2.4.1.228"/>
    </reaction>
    <physiologicalReaction direction="left-to-right" evidence="2">
        <dbReference type="Rhea" id="RHEA:11925"/>
    </physiologicalReaction>
</comment>
<comment type="catalytic activity">
    <reaction evidence="2">
        <text>a beta-D-Gal-(1&lt;-&gt;1')-ceramide + UDP-alpha-D-galactose = alpha-D-Gal-(1-&gt;4)-beta-D-Gal-(1&lt;-&gt;1')-Cer + UDP + H(+)</text>
        <dbReference type="Rhea" id="RHEA:60044"/>
        <dbReference type="ChEBI" id="CHEBI:15378"/>
        <dbReference type="ChEBI" id="CHEBI:58223"/>
        <dbReference type="ChEBI" id="CHEBI:66914"/>
        <dbReference type="ChEBI" id="CHEBI:143593"/>
        <dbReference type="ChEBI" id="CHEBI:143594"/>
    </reaction>
    <physiologicalReaction direction="left-to-right" evidence="2">
        <dbReference type="Rhea" id="RHEA:60045"/>
    </physiologicalReaction>
</comment>
<comment type="pathway">
    <text evidence="2">Glycolipid biosynthesis.</text>
</comment>
<comment type="subcellular location">
    <subcellularLocation>
        <location evidence="3">Golgi apparatus membrane</location>
        <topology evidence="3">Single-pass type II membrane protein</topology>
    </subcellularLocation>
</comment>
<comment type="domain">
    <text evidence="1">The conserved DXD motif is involved in enzyme activity.</text>
</comment>
<comment type="similarity">
    <text evidence="3">Belongs to the glycosyltransferase 32 family.</text>
</comment>
<accession>Q9N289</accession>